<organism evidence="4">
    <name type="scientific">Drosophila melanogaster</name>
    <name type="common">Fruit fly</name>
    <dbReference type="NCBI Taxonomy" id="7227"/>
    <lineage>
        <taxon>Eukaryota</taxon>
        <taxon>Metazoa</taxon>
        <taxon>Ecdysozoa</taxon>
        <taxon>Arthropoda</taxon>
        <taxon>Hexapoda</taxon>
        <taxon>Insecta</taxon>
        <taxon>Pterygota</taxon>
        <taxon>Neoptera</taxon>
        <taxon>Endopterygota</taxon>
        <taxon>Diptera</taxon>
        <taxon>Brachycera</taxon>
        <taxon>Muscomorpha</taxon>
        <taxon>Ephydroidea</taxon>
        <taxon>Drosophilidae</taxon>
        <taxon>Drosophila</taxon>
        <taxon>Sophophora</taxon>
    </lineage>
</organism>
<reference key="1">
    <citation type="journal article" date="2000" name="Science">
        <title>The genome sequence of Drosophila melanogaster.</title>
        <authorList>
            <person name="Adams M.D."/>
            <person name="Celniker S.E."/>
            <person name="Holt R.A."/>
            <person name="Evans C.A."/>
            <person name="Gocayne J.D."/>
            <person name="Amanatides P.G."/>
            <person name="Scherer S.E."/>
            <person name="Li P.W."/>
            <person name="Hoskins R.A."/>
            <person name="Galle R.F."/>
            <person name="George R.A."/>
            <person name="Lewis S.E."/>
            <person name="Richards S."/>
            <person name="Ashburner M."/>
            <person name="Henderson S.N."/>
            <person name="Sutton G.G."/>
            <person name="Wortman J.R."/>
            <person name="Yandell M.D."/>
            <person name="Zhang Q."/>
            <person name="Chen L.X."/>
            <person name="Brandon R.C."/>
            <person name="Rogers Y.-H.C."/>
            <person name="Blazej R.G."/>
            <person name="Champe M."/>
            <person name="Pfeiffer B.D."/>
            <person name="Wan K.H."/>
            <person name="Doyle C."/>
            <person name="Baxter E.G."/>
            <person name="Helt G."/>
            <person name="Nelson C.R."/>
            <person name="Miklos G.L.G."/>
            <person name="Abril J.F."/>
            <person name="Agbayani A."/>
            <person name="An H.-J."/>
            <person name="Andrews-Pfannkoch C."/>
            <person name="Baldwin D."/>
            <person name="Ballew R.M."/>
            <person name="Basu A."/>
            <person name="Baxendale J."/>
            <person name="Bayraktaroglu L."/>
            <person name="Beasley E.M."/>
            <person name="Beeson K.Y."/>
            <person name="Benos P.V."/>
            <person name="Berman B.P."/>
            <person name="Bhandari D."/>
            <person name="Bolshakov S."/>
            <person name="Borkova D."/>
            <person name="Botchan M.R."/>
            <person name="Bouck J."/>
            <person name="Brokstein P."/>
            <person name="Brottier P."/>
            <person name="Burtis K.C."/>
            <person name="Busam D.A."/>
            <person name="Butler H."/>
            <person name="Cadieu E."/>
            <person name="Center A."/>
            <person name="Chandra I."/>
            <person name="Cherry J.M."/>
            <person name="Cawley S."/>
            <person name="Dahlke C."/>
            <person name="Davenport L.B."/>
            <person name="Davies P."/>
            <person name="de Pablos B."/>
            <person name="Delcher A."/>
            <person name="Deng Z."/>
            <person name="Mays A.D."/>
            <person name="Dew I."/>
            <person name="Dietz S.M."/>
            <person name="Dodson K."/>
            <person name="Doup L.E."/>
            <person name="Downes M."/>
            <person name="Dugan-Rocha S."/>
            <person name="Dunkov B.C."/>
            <person name="Dunn P."/>
            <person name="Durbin K.J."/>
            <person name="Evangelista C.C."/>
            <person name="Ferraz C."/>
            <person name="Ferriera S."/>
            <person name="Fleischmann W."/>
            <person name="Fosler C."/>
            <person name="Gabrielian A.E."/>
            <person name="Garg N.S."/>
            <person name="Gelbart W.M."/>
            <person name="Glasser K."/>
            <person name="Glodek A."/>
            <person name="Gong F."/>
            <person name="Gorrell J.H."/>
            <person name="Gu Z."/>
            <person name="Guan P."/>
            <person name="Harris M."/>
            <person name="Harris N.L."/>
            <person name="Harvey D.A."/>
            <person name="Heiman T.J."/>
            <person name="Hernandez J.R."/>
            <person name="Houck J."/>
            <person name="Hostin D."/>
            <person name="Houston K.A."/>
            <person name="Howland T.J."/>
            <person name="Wei M.-H."/>
            <person name="Ibegwam C."/>
            <person name="Jalali M."/>
            <person name="Kalush F."/>
            <person name="Karpen G.H."/>
            <person name="Ke Z."/>
            <person name="Kennison J.A."/>
            <person name="Ketchum K.A."/>
            <person name="Kimmel B.E."/>
            <person name="Kodira C.D."/>
            <person name="Kraft C.L."/>
            <person name="Kravitz S."/>
            <person name="Kulp D."/>
            <person name="Lai Z."/>
            <person name="Lasko P."/>
            <person name="Lei Y."/>
            <person name="Levitsky A.A."/>
            <person name="Li J.H."/>
            <person name="Li Z."/>
            <person name="Liang Y."/>
            <person name="Lin X."/>
            <person name="Liu X."/>
            <person name="Mattei B."/>
            <person name="McIntosh T.C."/>
            <person name="McLeod M.P."/>
            <person name="McPherson D."/>
            <person name="Merkulov G."/>
            <person name="Milshina N.V."/>
            <person name="Mobarry C."/>
            <person name="Morris J."/>
            <person name="Moshrefi A."/>
            <person name="Mount S.M."/>
            <person name="Moy M."/>
            <person name="Murphy B."/>
            <person name="Murphy L."/>
            <person name="Muzny D.M."/>
            <person name="Nelson D.L."/>
            <person name="Nelson D.R."/>
            <person name="Nelson K.A."/>
            <person name="Nixon K."/>
            <person name="Nusskern D.R."/>
            <person name="Pacleb J.M."/>
            <person name="Palazzolo M."/>
            <person name="Pittman G.S."/>
            <person name="Pan S."/>
            <person name="Pollard J."/>
            <person name="Puri V."/>
            <person name="Reese M.G."/>
            <person name="Reinert K."/>
            <person name="Remington K."/>
            <person name="Saunders R.D.C."/>
            <person name="Scheeler F."/>
            <person name="Shen H."/>
            <person name="Shue B.C."/>
            <person name="Siden-Kiamos I."/>
            <person name="Simpson M."/>
            <person name="Skupski M.P."/>
            <person name="Smith T.J."/>
            <person name="Spier E."/>
            <person name="Spradling A.C."/>
            <person name="Stapleton M."/>
            <person name="Strong R."/>
            <person name="Sun E."/>
            <person name="Svirskas R."/>
            <person name="Tector C."/>
            <person name="Turner R."/>
            <person name="Venter E."/>
            <person name="Wang A.H."/>
            <person name="Wang X."/>
            <person name="Wang Z.-Y."/>
            <person name="Wassarman D.A."/>
            <person name="Weinstock G.M."/>
            <person name="Weissenbach J."/>
            <person name="Williams S.M."/>
            <person name="Woodage T."/>
            <person name="Worley K.C."/>
            <person name="Wu D."/>
            <person name="Yang S."/>
            <person name="Yao Q.A."/>
            <person name="Ye J."/>
            <person name="Yeh R.-F."/>
            <person name="Zaveri J.S."/>
            <person name="Zhan M."/>
            <person name="Zhang G."/>
            <person name="Zhao Q."/>
            <person name="Zheng L."/>
            <person name="Zheng X.H."/>
            <person name="Zhong F.N."/>
            <person name="Zhong W."/>
            <person name="Zhou X."/>
            <person name="Zhu S.C."/>
            <person name="Zhu X."/>
            <person name="Smith H.O."/>
            <person name="Gibbs R.A."/>
            <person name="Myers E.W."/>
            <person name="Rubin G.M."/>
            <person name="Venter J.C."/>
        </authorList>
    </citation>
    <scope>NUCLEOTIDE SEQUENCE [LARGE SCALE GENOMIC DNA]</scope>
    <source>
        <strain>Berkeley</strain>
    </source>
</reference>
<reference key="2">
    <citation type="journal article" date="2002" name="Genome Biol.">
        <title>Annotation of the Drosophila melanogaster euchromatic genome: a systematic review.</title>
        <authorList>
            <person name="Misra S."/>
            <person name="Crosby M.A."/>
            <person name="Mungall C.J."/>
            <person name="Matthews B.B."/>
            <person name="Campbell K.S."/>
            <person name="Hradecky P."/>
            <person name="Huang Y."/>
            <person name="Kaminker J.S."/>
            <person name="Millburn G.H."/>
            <person name="Prochnik S.E."/>
            <person name="Smith C.D."/>
            <person name="Tupy J.L."/>
            <person name="Whitfield E.J."/>
            <person name="Bayraktaroglu L."/>
            <person name="Berman B.P."/>
            <person name="Bettencourt B.R."/>
            <person name="Celniker S.E."/>
            <person name="de Grey A.D.N.J."/>
            <person name="Drysdale R.A."/>
            <person name="Harris N.L."/>
            <person name="Richter J."/>
            <person name="Russo S."/>
            <person name="Schroeder A.J."/>
            <person name="Shu S.Q."/>
            <person name="Stapleton M."/>
            <person name="Yamada C."/>
            <person name="Ashburner M."/>
            <person name="Gelbart W.M."/>
            <person name="Rubin G.M."/>
            <person name="Lewis S.E."/>
        </authorList>
    </citation>
    <scope>GENOME REANNOTATION</scope>
    <source>
        <strain>Berkeley</strain>
    </source>
</reference>
<reference key="3">
    <citation type="journal article" date="2002" name="Genome Biol.">
        <title>A Drosophila full-length cDNA resource.</title>
        <authorList>
            <person name="Stapleton M."/>
            <person name="Carlson J.W."/>
            <person name="Brokstein P."/>
            <person name="Yu C."/>
            <person name="Champe M."/>
            <person name="George R.A."/>
            <person name="Guarin H."/>
            <person name="Kronmiller B."/>
            <person name="Pacleb J.M."/>
            <person name="Park S."/>
            <person name="Wan K.H."/>
            <person name="Rubin G.M."/>
            <person name="Celniker S.E."/>
        </authorList>
    </citation>
    <scope>NUCLEOTIDE SEQUENCE [LARGE SCALE MRNA]</scope>
    <source>
        <strain>Berkeley</strain>
        <tissue>Embryo</tissue>
    </source>
</reference>
<gene>
    <name evidence="3" type="primary">Stlk</name>
    <name evidence="3" type="synonym">STRADalpha</name>
    <name evidence="3" type="ORF">CG40293</name>
</gene>
<comment type="domain">
    <text evidence="1">The protein kinase domain is predicted to be catalytically inactive.</text>
</comment>
<comment type="similarity">
    <text evidence="2">Belongs to the protein kinase superfamily. STE Ser/Thr protein kinase family. STE20 subfamily.</text>
</comment>
<protein>
    <recommendedName>
        <fullName evidence="2">STE20-related kinase adapter protein stlk</fullName>
        <shortName evidence="2">STRAD</shortName>
    </recommendedName>
    <alternativeName>
        <fullName evidence="3">Ste20-like kinase</fullName>
    </alternativeName>
</protein>
<dbReference type="EMBL" id="AE013599">
    <property type="protein sequence ID" value="EAA45984.1"/>
    <property type="molecule type" value="Genomic_DNA"/>
</dbReference>
<dbReference type="EMBL" id="AY069348">
    <property type="protein sequence ID" value="AAL39493.1"/>
    <property type="molecule type" value="mRNA"/>
</dbReference>
<dbReference type="RefSeq" id="NP_001036442.1">
    <property type="nucleotide sequence ID" value="NM_001042977.3"/>
</dbReference>
<dbReference type="RefSeq" id="NP_001246138.1">
    <property type="nucleotide sequence ID" value="NM_001259209.2"/>
</dbReference>
<dbReference type="SMR" id="P83098"/>
<dbReference type="BioGRID" id="78260">
    <property type="interactions" value="1"/>
</dbReference>
<dbReference type="ComplexPortal" id="CPX-9064">
    <property type="entry name" value="LKB1-STRAD-MO25 serine/threonine protein kinase complex"/>
</dbReference>
<dbReference type="FunCoup" id="P83098">
    <property type="interactions" value="1248"/>
</dbReference>
<dbReference type="STRING" id="7227.FBpp0110403"/>
<dbReference type="PaxDb" id="7227-FBpp0110403"/>
<dbReference type="DNASU" id="3355135"/>
<dbReference type="EnsemblMetazoa" id="FBtr0111111">
    <property type="protein sequence ID" value="FBpp0110403"/>
    <property type="gene ID" value="FBgn0046692"/>
</dbReference>
<dbReference type="EnsemblMetazoa" id="FBtr0308810">
    <property type="protein sequence ID" value="FBpp0300967"/>
    <property type="gene ID" value="FBgn0046692"/>
</dbReference>
<dbReference type="GeneID" id="3355135"/>
<dbReference type="KEGG" id="dme:Dmel_CG40293"/>
<dbReference type="AGR" id="FB:FBgn0046692"/>
<dbReference type="CTD" id="3355135"/>
<dbReference type="FlyBase" id="FBgn0046692">
    <property type="gene designation" value="Stlk"/>
</dbReference>
<dbReference type="VEuPathDB" id="VectorBase:FBgn0046692"/>
<dbReference type="eggNOG" id="KOG0582">
    <property type="taxonomic scope" value="Eukaryota"/>
</dbReference>
<dbReference type="GeneTree" id="ENSGT00940000168867"/>
<dbReference type="HOGENOM" id="CLU_000288_63_23_1"/>
<dbReference type="InParanoid" id="P83098"/>
<dbReference type="OMA" id="INGVMPF"/>
<dbReference type="OrthoDB" id="840771at2759"/>
<dbReference type="PhylomeDB" id="P83098"/>
<dbReference type="BioGRID-ORCS" id="3355135">
    <property type="hits" value="1 hit in 3 CRISPR screens"/>
</dbReference>
<dbReference type="GenomeRNAi" id="3355135"/>
<dbReference type="PRO" id="PR:P83098"/>
<dbReference type="Proteomes" id="UP000000803">
    <property type="component" value="Chromosome 2R"/>
</dbReference>
<dbReference type="Bgee" id="FBgn0046692">
    <property type="expression patterns" value="Expressed in cleaving embryo and 257 other cell types or tissues"/>
</dbReference>
<dbReference type="ExpressionAtlas" id="P83098">
    <property type="expression patterns" value="baseline and differential"/>
</dbReference>
<dbReference type="GO" id="GO:0005737">
    <property type="term" value="C:cytoplasm"/>
    <property type="evidence" value="ECO:0000250"/>
    <property type="project" value="FlyBase"/>
</dbReference>
<dbReference type="GO" id="GO:0005634">
    <property type="term" value="C:nucleus"/>
    <property type="evidence" value="ECO:0000250"/>
    <property type="project" value="FlyBase"/>
</dbReference>
<dbReference type="GO" id="GO:0005524">
    <property type="term" value="F:ATP binding"/>
    <property type="evidence" value="ECO:0007669"/>
    <property type="project" value="UniProtKB-KW"/>
</dbReference>
<dbReference type="GO" id="GO:0043539">
    <property type="term" value="F:protein serine/threonine kinase activator activity"/>
    <property type="evidence" value="ECO:0000250"/>
    <property type="project" value="FlyBase"/>
</dbReference>
<dbReference type="GO" id="GO:1904263">
    <property type="term" value="P:positive regulation of TORC1 signaling"/>
    <property type="evidence" value="ECO:0000304"/>
    <property type="project" value="FlyBase"/>
</dbReference>
<dbReference type="CDD" id="cd08216">
    <property type="entry name" value="PK_STRAD"/>
    <property type="match status" value="1"/>
</dbReference>
<dbReference type="Gene3D" id="3.30.200.20">
    <property type="entry name" value="Phosphorylase Kinase, domain 1"/>
    <property type="match status" value="1"/>
</dbReference>
<dbReference type="Gene3D" id="1.10.510.10">
    <property type="entry name" value="Transferase(Phosphotransferase) domain 1"/>
    <property type="match status" value="1"/>
</dbReference>
<dbReference type="InterPro" id="IPR011009">
    <property type="entry name" value="Kinase-like_dom_sf"/>
</dbReference>
<dbReference type="InterPro" id="IPR000719">
    <property type="entry name" value="Prot_kinase_dom"/>
</dbReference>
<dbReference type="InterPro" id="IPR047173">
    <property type="entry name" value="STRAD_A/B-like"/>
</dbReference>
<dbReference type="PANTHER" id="PTHR48014">
    <property type="entry name" value="SERINE/THREONINE-PROTEIN KINASE FRAY2"/>
    <property type="match status" value="1"/>
</dbReference>
<dbReference type="PANTHER" id="PTHR48014:SF21">
    <property type="entry name" value="SERINE_THREONINE-PROTEIN KINASE FRAY2"/>
    <property type="match status" value="1"/>
</dbReference>
<dbReference type="Pfam" id="PF00069">
    <property type="entry name" value="Pkinase"/>
    <property type="match status" value="1"/>
</dbReference>
<dbReference type="SUPFAM" id="SSF56112">
    <property type="entry name" value="Protein kinase-like (PK-like)"/>
    <property type="match status" value="1"/>
</dbReference>
<dbReference type="PROSITE" id="PS50011">
    <property type="entry name" value="PROTEIN_KINASE_DOM"/>
    <property type="match status" value="1"/>
</dbReference>
<evidence type="ECO:0000255" key="1">
    <source>
        <dbReference type="PROSITE-ProRule" id="PRU00159"/>
    </source>
</evidence>
<evidence type="ECO:0000305" key="2"/>
<evidence type="ECO:0000312" key="3">
    <source>
        <dbReference type="FlyBase" id="FBgn0046692"/>
    </source>
</evidence>
<evidence type="ECO:0000312" key="4">
    <source>
        <dbReference type="Proteomes" id="UP000000803"/>
    </source>
</evidence>
<sequence length="346" mass="39895">MMCSNNISDYKLLEILKNGMIGTVYKAEDINNKCLAVKKVSMDQPMEKLTLLFNEVLTVRRLQHRNINTIVSCFLYKQYVYLTYKFMCFGNCEVLLKNVYTSGFPEVAIALILKDVLSALTYIHSEHYVHGSVRAKHILLSPRKAVLSNFSYCQSFISQGEKKTFIFGSTVGIEKELYWTAPEVLYQNLSGYTEKIDIYSIGITCCEMANGFQPFKDTELTYMYIEKVRGSLQVLLDKNSLLENQGSLSLEHTNKRIARDVIVNKSFSENFHQFVELCLNKNPLSRWAASKLMTHSFLKQCRNTSLLDQLKDLGQKMSKFKRNEHEIFSDARGSHNPQPNDTIWKF</sequence>
<keyword id="KW-0067">ATP-binding</keyword>
<keyword id="KW-0547">Nucleotide-binding</keyword>
<keyword id="KW-1185">Reference proteome</keyword>
<accession>P83098</accession>
<accession>Q7PLH7</accession>
<accession>Q8T0F8</accession>
<name>STRA_DROME</name>
<proteinExistence type="evidence at transcript level"/>
<feature type="chain" id="PRO_0000086725" description="STE20-related kinase adapter protein stlk">
    <location>
        <begin position="1"/>
        <end position="346"/>
    </location>
</feature>
<feature type="domain" description="Protein kinase" evidence="1">
    <location>
        <begin position="10"/>
        <end position="298"/>
    </location>
</feature>
<feature type="binding site" evidence="1">
    <location>
        <begin position="16"/>
        <end position="24"/>
    </location>
    <ligand>
        <name>ATP</name>
        <dbReference type="ChEBI" id="CHEBI:30616"/>
    </ligand>
</feature>
<feature type="binding site" evidence="1">
    <location>
        <position position="38"/>
    </location>
    <ligand>
        <name>ATP</name>
        <dbReference type="ChEBI" id="CHEBI:30616"/>
    </ligand>
</feature>